<keyword id="KW-0426">Late protein</keyword>
<keyword id="KW-0946">Virion</keyword>
<reference key="1">
    <citation type="journal article" date="1998" name="Virology">
        <title>The complete genomic sequence of the modified vaccinia Ankara strain: comparison with other orthopoxviruses.</title>
        <authorList>
            <person name="Antoine G."/>
            <person name="Scheiflinger F."/>
            <person name="Dorner F."/>
            <person name="Falkner F.G."/>
        </authorList>
    </citation>
    <scope>NUCLEOTIDE SEQUENCE [LARGE SCALE GENOMIC DNA]</scope>
</reference>
<reference key="2">
    <citation type="submission" date="2004-04" db="EMBL/GenBank/DDBJ databases">
        <authorList>
            <person name="Esposito J.J."/>
            <person name="Frace M."/>
            <person name="Sammons S.A."/>
            <person name="Olsen-Rasmussen M.S."/>
            <person name="Osborne J."/>
            <person name="Khristova M."/>
            <person name="Wohlhueter R.M."/>
        </authorList>
    </citation>
    <scope>NUCLEOTIDE SEQUENCE [LARGE SCALE GENOMIC DNA]</scope>
    <source>
        <strain>Isolate Acambis 3000</strain>
    </source>
</reference>
<protein>
    <recommendedName>
        <fullName>25 kDa core protein OPG138</fullName>
    </recommendedName>
    <component>
        <recommendedName>
            <fullName>17 kDa core protein OPG138</fullName>
            <shortName>17K</shortName>
        </recommendedName>
    </component>
</protein>
<name>PG138_VACCA</name>
<gene>
    <name type="primary">OPG138</name>
    <name type="ordered locus">MVA123L</name>
    <name type="ordered locus">ACAM3000_MVA_123</name>
    <name type="ORF">A12L</name>
</gene>
<organism>
    <name type="scientific">Vaccinia virus (strain Ankara)</name>
    <name type="common">VACV</name>
    <dbReference type="NCBI Taxonomy" id="126794"/>
    <lineage>
        <taxon>Viruses</taxon>
        <taxon>Varidnaviria</taxon>
        <taxon>Bamfordvirae</taxon>
        <taxon>Nucleocytoviricota</taxon>
        <taxon>Pokkesviricetes</taxon>
        <taxon>Chitovirales</taxon>
        <taxon>Poxviridae</taxon>
        <taxon>Chordopoxvirinae</taxon>
        <taxon>Orthopoxvirus</taxon>
        <taxon>Vaccinia virus</taxon>
    </lineage>
</organism>
<comment type="function">
    <text evidence="1">Component of the virion core that undergoes proteolytic processing during the immature virion (IV) to mature virion (MV) transition. Essential for the formation of a structurally normal core.</text>
</comment>
<comment type="subcellular location">
    <molecule>25 kDa core protein OPG138</molecule>
    <subcellularLocation>
        <location evidence="1">Virion</location>
    </subcellularLocation>
    <text evidence="1">Localizes to the virion core.</text>
</comment>
<comment type="subcellular location">
    <molecule>17 kDa core protein OPG138</molecule>
    <subcellularLocation>
        <location evidence="1">Virion</location>
    </subcellularLocation>
    <text evidence="1">Localizes to the virion core.</text>
</comment>
<comment type="induction">
    <text>Expressed in the late phase of the viral replicative cycle.</text>
</comment>
<comment type="PTM">
    <text evidence="1">The 25-kDa precursor is cleaved to a mature protein of 17 kDa during virion maturation. Further proteolytic processing is supposed to occur since five more OPG138-derived products have been observed.</text>
</comment>
<comment type="similarity">
    <text evidence="3">Belongs to the orthopoxvirus OPG138 family.</text>
</comment>
<dbReference type="EMBL" id="U94848">
    <property type="protein sequence ID" value="AAB96463.1"/>
    <property type="molecule type" value="Genomic_DNA"/>
</dbReference>
<dbReference type="EMBL" id="AY603355">
    <property type="protein sequence ID" value="AAT10521.1"/>
    <property type="molecule type" value="Genomic_DNA"/>
</dbReference>
<dbReference type="PIR" id="T37399">
    <property type="entry name" value="T37399"/>
</dbReference>
<dbReference type="SMR" id="O57224"/>
<dbReference type="Proteomes" id="UP000159908">
    <property type="component" value="Segment"/>
</dbReference>
<dbReference type="Proteomes" id="UP000172909">
    <property type="component" value="Segment"/>
</dbReference>
<dbReference type="GO" id="GO:0044423">
    <property type="term" value="C:virion component"/>
    <property type="evidence" value="ECO:0007669"/>
    <property type="project" value="UniProtKB-KW"/>
</dbReference>
<dbReference type="InterPro" id="IPR006744">
    <property type="entry name" value="Poxvirus_A12"/>
</dbReference>
<dbReference type="Pfam" id="PF04651">
    <property type="entry name" value="Pox_A12"/>
    <property type="match status" value="1"/>
</dbReference>
<feature type="chain" id="PRO_0000099235" description="25 kDa core protein OPG138" evidence="1">
    <location>
        <begin position="1"/>
        <end position="187"/>
    </location>
</feature>
<feature type="chain" id="PRO_0000413913" description="17 kDa core protein OPG138" evidence="1">
    <location>
        <begin position="1"/>
        <end position="56"/>
    </location>
</feature>
<feature type="region of interest" description="Disordered" evidence="2">
    <location>
        <begin position="66"/>
        <end position="99"/>
    </location>
</feature>
<feature type="region of interest" description="Disordered" evidence="2">
    <location>
        <begin position="147"/>
        <end position="173"/>
    </location>
</feature>
<feature type="compositionally biased region" description="Low complexity" evidence="2">
    <location>
        <begin position="66"/>
        <end position="86"/>
    </location>
</feature>
<feature type="compositionally biased region" description="Basic residues" evidence="2">
    <location>
        <begin position="149"/>
        <end position="159"/>
    </location>
</feature>
<feature type="site" description="Cleavage; by OPG083 protease" evidence="1">
    <location>
        <begin position="56"/>
        <end position="57"/>
    </location>
</feature>
<accession>O57224</accession>
<sequence length="187" mass="20002">MADKKNLAVRSSYDDYIETVNKITPQLKNLLAQIGGDAAVKGGNNNLNSQTDVTAGACDTKCITCKPKSKSSSSSTSTSKGSKNTSGAPRRRTTVTTTSYNAMDGQIVQAVTNAGKIVYGTVRDGQLEVRGMVGEINHDLLGIDSVNAGKKKPSKKMPTNKKINMSSGMRRQEQINPDDCCLDMGMY</sequence>
<evidence type="ECO:0000250" key="1">
    <source>
        <dbReference type="UniProtKB" id="Q80HV7"/>
    </source>
</evidence>
<evidence type="ECO:0000256" key="2">
    <source>
        <dbReference type="SAM" id="MobiDB-lite"/>
    </source>
</evidence>
<evidence type="ECO:0000305" key="3"/>
<proteinExistence type="evidence at transcript level"/>
<organismHost>
    <name type="scientific">Homo sapiens</name>
    <name type="common">Human</name>
    <dbReference type="NCBI Taxonomy" id="9606"/>
</organismHost>